<reference evidence="5" key="1">
    <citation type="submission" date="2007-12" db="EMBL/GenBank/DDBJ databases">
        <title>DOE Joint Genome Institute Lottia gigantea EST project.</title>
        <authorList>
            <person name="Richardson P."/>
            <person name="Lucas S."/>
            <person name="Rokhsar D."/>
            <person name="Wang M."/>
            <person name="Lindquist E.A."/>
        </authorList>
    </citation>
    <scope>NUCLEOTIDE SEQUENCE [LARGE SCALE MRNA]</scope>
    <scope>IDENTIFICATION</scope>
    <source>
        <tissue evidence="4">Mantle</tissue>
    </source>
</reference>
<reference key="2">
    <citation type="journal article" date="2013" name="FEBS J.">
        <title>The shell-forming proteome of Lottia gigantea reveals both deep conservations and lineage-specific novelties.</title>
        <authorList>
            <person name="Marie B."/>
            <person name="Jackson D.J."/>
            <person name="Ramos-Silva P."/>
            <person name="Zanella-Cleon I."/>
            <person name="Guichard N."/>
            <person name="Marin F."/>
        </authorList>
    </citation>
    <scope>PROTEIN SEQUENCE OF 43-160</scope>
    <scope>SUBCELLULAR LOCATION</scope>
    <scope>TISSUE SPECIFICITY</scope>
    <source>
        <tissue>Shell</tissue>
    </source>
</reference>
<organism>
    <name type="scientific">Lottia gigantea</name>
    <name type="common">Giant owl limpet</name>
    <dbReference type="NCBI Taxonomy" id="225164"/>
    <lineage>
        <taxon>Eukaryota</taxon>
        <taxon>Metazoa</taxon>
        <taxon>Spiralia</taxon>
        <taxon>Lophotrochozoa</taxon>
        <taxon>Mollusca</taxon>
        <taxon>Gastropoda</taxon>
        <taxon>Patellogastropoda</taxon>
        <taxon>Lottioidea</taxon>
        <taxon>Lottiidae</taxon>
        <taxon>Lottia</taxon>
    </lineage>
</organism>
<comment type="subcellular location">
    <subcellularLocation>
        <location evidence="3">Secreted</location>
    </subcellularLocation>
</comment>
<comment type="tissue specificity">
    <text evidence="3">Component of the acid-insoluble and acid-soluble organic matrix of calcified layers of the shell (at protein level).</text>
</comment>
<keyword id="KW-0903">Direct protein sequencing</keyword>
<keyword id="KW-0964">Secreted</keyword>
<keyword id="KW-0732">Signal</keyword>
<accession>B3A0Q2</accession>
<protein>
    <recommendedName>
        <fullName>Glycine and tyrosine-rich protein</fullName>
    </recommendedName>
    <alternativeName>
        <fullName>Uncharacterized shell protein 7</fullName>
        <shortName>LUSP-7</shortName>
    </alternativeName>
</protein>
<proteinExistence type="evidence at protein level"/>
<name>GTRP_LOTGI</name>
<evidence type="ECO:0000255" key="1"/>
<evidence type="ECO:0000256" key="2">
    <source>
        <dbReference type="SAM" id="MobiDB-lite"/>
    </source>
</evidence>
<evidence type="ECO:0000269" key="3">
    <source>
    </source>
</evidence>
<evidence type="ECO:0000269" key="4">
    <source ref="1"/>
</evidence>
<evidence type="ECO:0000305" key="5"/>
<dbReference type="EMBL" id="FC625247">
    <property type="status" value="NOT_ANNOTATED_CDS"/>
    <property type="molecule type" value="mRNA"/>
</dbReference>
<dbReference type="EMBL" id="FC626411">
    <property type="status" value="NOT_ANNOTATED_CDS"/>
    <property type="molecule type" value="mRNA"/>
</dbReference>
<dbReference type="GO" id="GO:0005576">
    <property type="term" value="C:extracellular region"/>
    <property type="evidence" value="ECO:0007669"/>
    <property type="project" value="UniProtKB-SubCell"/>
</dbReference>
<feature type="signal peptide" evidence="1">
    <location>
        <begin position="1"/>
        <end position="18"/>
    </location>
</feature>
<feature type="chain" id="PRO_0000415250" description="Glycine and tyrosine-rich protein" evidence="1">
    <location>
        <begin position="19"/>
        <end position="296"/>
    </location>
</feature>
<feature type="region of interest" description="Disordered" evidence="2">
    <location>
        <begin position="157"/>
        <end position="280"/>
    </location>
</feature>
<feature type="compositionally biased region" description="Low complexity" evidence="2">
    <location>
        <begin position="172"/>
        <end position="264"/>
    </location>
</feature>
<sequence length="296" mass="30295">MKVLVTALIISFSTAVLTVPVSIITAPLSVETIPGSSLDSTKVLGKLEAAYAQYGADSTSFKNSLQNIINAYMSIAADYEAQAGILEVRADIAEAAKNDVLATELEIKGDALEALAEGYTKTAEMLQEFLKLISEHEHKLSVVFREVKSGMIGTAAMESRLRPQATSSLPATGGQPSTGGKPTTGGQPTTGGQPSTGGQPSTGGQPTTGGQSITGGQPTTGGQPTTGGLPTTGGQPSTGGQPTTGGQPTTGGQPSTGGQPSTGGHQQLGVNQPEETPAPNRQLKMFRHYSKVCWQI</sequence>